<evidence type="ECO:0000250" key="1">
    <source>
        <dbReference type="UniProtKB" id="Q9NXB9"/>
    </source>
</evidence>
<evidence type="ECO:0000255" key="2">
    <source>
        <dbReference type="HAMAP-Rule" id="MF_03202"/>
    </source>
</evidence>
<evidence type="ECO:0000269" key="3">
    <source>
    </source>
</evidence>
<evidence type="ECO:0000269" key="4">
    <source>
    </source>
</evidence>
<evidence type="ECO:0000269" key="5">
    <source>
    </source>
</evidence>
<evidence type="ECO:0000305" key="6"/>
<evidence type="ECO:0000305" key="7">
    <source>
    </source>
</evidence>
<gene>
    <name evidence="2" type="primary">Elovl2</name>
    <name type="synonym">Ssc2</name>
</gene>
<protein>
    <recommendedName>
        <fullName evidence="2">Very long chain fatty acid elongase 2</fullName>
        <ecNumber evidence="2 4 5">2.3.1.199</ecNumber>
    </recommendedName>
    <alternativeName>
        <fullName evidence="2">3-keto acyl-CoA synthase Elovl2</fullName>
    </alternativeName>
    <alternativeName>
        <fullName evidence="2">ELOVL fatty acid elongase 2</fullName>
        <shortName evidence="2">ELOVL FA elongase 2</shortName>
    </alternativeName>
    <alternativeName>
        <fullName evidence="2">Elongation of very long chain fatty acids protein 2</fullName>
    </alternativeName>
    <alternativeName>
        <fullName evidence="2">Very long chain 3-ketoacyl-CoA synthase 2</fullName>
    </alternativeName>
    <alternativeName>
        <fullName evidence="2">Very long chain 3-oxoacyl-CoA synthase 2</fullName>
    </alternativeName>
</protein>
<proteinExistence type="evidence at protein level"/>
<name>ELOV2_MOUSE</name>
<comment type="function">
    <text evidence="2 4 5">Catalyzes the first and rate-limiting reaction of the four reactions that constitute the long-chain fatty acids elongation cycle. This endoplasmic reticulum-bound enzymatic process allows the addition of 2 carbons to the chain of long- and very long-chain fatty acids (VLCFAs) per cycle. Condensing enzyme that catalyzes the synthesis of polyunsaturated very long chain fatty acid (C20- and C22-PUFA), acting specifically toward polyunsaturated acyl-CoA with the higher activity toward C20:4(n-6) acyl-CoA. May participate in the production of polyunsaturated VLCFAs of different chain lengths that are involved in multiple biological processes as precursors of membrane lipids and lipid mediators. Essential for the formation of C24:5(n-6) up to C30:5(n-6) PUFAs in testis, these fatty acids being indispensable for normal spermatogenesis and fertility.</text>
</comment>
<comment type="catalytic activity">
    <reaction evidence="2 4 5">
        <text>a very-long-chain acyl-CoA + malonyl-CoA + H(+) = a very-long-chain 3-oxoacyl-CoA + CO2 + CoA</text>
        <dbReference type="Rhea" id="RHEA:32727"/>
        <dbReference type="ChEBI" id="CHEBI:15378"/>
        <dbReference type="ChEBI" id="CHEBI:16526"/>
        <dbReference type="ChEBI" id="CHEBI:57287"/>
        <dbReference type="ChEBI" id="CHEBI:57384"/>
        <dbReference type="ChEBI" id="CHEBI:90725"/>
        <dbReference type="ChEBI" id="CHEBI:90736"/>
        <dbReference type="EC" id="2.3.1.199"/>
    </reaction>
    <physiologicalReaction direction="left-to-right" evidence="7">
        <dbReference type="Rhea" id="RHEA:32728"/>
    </physiologicalReaction>
</comment>
<comment type="catalytic activity">
    <reaction evidence="4">
        <text>(5Z,8Z,11Z,14Z)-eicosatetraenoyl-CoA + malonyl-CoA + H(+) = (7Z,10Z,13Z,16Z)-3-oxodocosatetraenoyl-CoA + CO2 + CoA</text>
        <dbReference type="Rhea" id="RHEA:36475"/>
        <dbReference type="ChEBI" id="CHEBI:15378"/>
        <dbReference type="ChEBI" id="CHEBI:16526"/>
        <dbReference type="ChEBI" id="CHEBI:57287"/>
        <dbReference type="ChEBI" id="CHEBI:57368"/>
        <dbReference type="ChEBI" id="CHEBI:57384"/>
        <dbReference type="ChEBI" id="CHEBI:73852"/>
    </reaction>
    <physiologicalReaction direction="left-to-right" evidence="7">
        <dbReference type="Rhea" id="RHEA:36476"/>
    </physiologicalReaction>
</comment>
<comment type="catalytic activity">
    <reaction evidence="4 5">
        <text>(7Z,10Z,13Z,16Z)-docosatetraenoyl-CoA + malonyl-CoA + H(+) = (9Z,12Z,15Z,18Z)-3-oxotetracosatetraenoyl-CoA + CO2 + CoA</text>
        <dbReference type="Rhea" id="RHEA:36479"/>
        <dbReference type="ChEBI" id="CHEBI:15378"/>
        <dbReference type="ChEBI" id="CHEBI:16526"/>
        <dbReference type="ChEBI" id="CHEBI:57287"/>
        <dbReference type="ChEBI" id="CHEBI:57384"/>
        <dbReference type="ChEBI" id="CHEBI:73856"/>
        <dbReference type="ChEBI" id="CHEBI:73857"/>
    </reaction>
    <physiologicalReaction direction="left-to-right" evidence="7">
        <dbReference type="Rhea" id="RHEA:36480"/>
    </physiologicalReaction>
</comment>
<comment type="catalytic activity">
    <reaction evidence="4">
        <text>(5Z,8Z,11Z,14Z,17Z)-eicosapentaenoyl-CoA + malonyl-CoA + H(+) = 3-oxo-(7Z,10Z,13Z,16Z,19Z)-docosapentaenoyl-CoA + CO2 + CoA</text>
        <dbReference type="Rhea" id="RHEA:36483"/>
        <dbReference type="ChEBI" id="CHEBI:15378"/>
        <dbReference type="ChEBI" id="CHEBI:16526"/>
        <dbReference type="ChEBI" id="CHEBI:57287"/>
        <dbReference type="ChEBI" id="CHEBI:57384"/>
        <dbReference type="ChEBI" id="CHEBI:73862"/>
        <dbReference type="ChEBI" id="CHEBI:73863"/>
    </reaction>
    <physiologicalReaction direction="left-to-right" evidence="7">
        <dbReference type="Rhea" id="RHEA:36484"/>
    </physiologicalReaction>
</comment>
<comment type="catalytic activity">
    <reaction evidence="4 5">
        <text>(7Z,10Z,13Z,16Z,19Z)-docosapentaenoyl-CoA + malonyl-CoA + H(+) = (9Z,12Z,15Z,18Z,21Z)-3-oxotetracosapentaenoyl-CoA + CO2 + CoA</text>
        <dbReference type="Rhea" id="RHEA:36491"/>
        <dbReference type="ChEBI" id="CHEBI:15378"/>
        <dbReference type="ChEBI" id="CHEBI:16526"/>
        <dbReference type="ChEBI" id="CHEBI:57287"/>
        <dbReference type="ChEBI" id="CHEBI:57384"/>
        <dbReference type="ChEBI" id="CHEBI:73870"/>
        <dbReference type="ChEBI" id="CHEBI:73871"/>
    </reaction>
    <physiologicalReaction direction="left-to-right" evidence="7">
        <dbReference type="Rhea" id="RHEA:36492"/>
    </physiologicalReaction>
</comment>
<comment type="pathway">
    <text evidence="2 4 5">Lipid metabolism; polyunsaturated fatty acid biosynthesis.</text>
</comment>
<comment type="subunit">
    <text evidence="1">Interacts with TECR.</text>
</comment>
<comment type="subcellular location">
    <subcellularLocation>
        <location evidence="2">Endoplasmic reticulum membrane</location>
        <topology evidence="2">Multi-pass membrane protein</topology>
    </subcellularLocation>
</comment>
<comment type="tissue specificity">
    <text evidence="3 4">Highly expressed in testis, lower level in liver. Weakly expressed in white adipose tissue, brain and kidney.</text>
</comment>
<comment type="domain">
    <text evidence="2">The C-terminal di-lysine motif may confer endoplasmic reticulum localization.</text>
</comment>
<comment type="similarity">
    <text evidence="2">Belongs to the ELO family. ELOVL2 subfamily.</text>
</comment>
<comment type="sequence caution" evidence="6">
    <conflict type="erroneous initiation">
        <sequence resource="EMBL-CDS" id="BAB29559"/>
    </conflict>
</comment>
<dbReference type="EC" id="2.3.1.199" evidence="2 4 5"/>
<dbReference type="EMBL" id="AF170908">
    <property type="protein sequence ID" value="AAF72573.1"/>
    <property type="molecule type" value="mRNA"/>
</dbReference>
<dbReference type="EMBL" id="AK014803">
    <property type="protein sequence ID" value="BAB29559.1"/>
    <property type="status" value="ALT_INIT"/>
    <property type="molecule type" value="mRNA"/>
</dbReference>
<dbReference type="EMBL" id="AK029855">
    <property type="protein sequence ID" value="BAC26646.1"/>
    <property type="molecule type" value="mRNA"/>
</dbReference>
<dbReference type="CCDS" id="CCDS36639.1"/>
<dbReference type="RefSeq" id="NP_001298050.1">
    <property type="nucleotide sequence ID" value="NM_001311121.1"/>
</dbReference>
<dbReference type="RefSeq" id="NP_062296.1">
    <property type="nucleotide sequence ID" value="NM_019423.2"/>
</dbReference>
<dbReference type="SMR" id="Q9JLJ4"/>
<dbReference type="FunCoup" id="Q9JLJ4">
    <property type="interactions" value="647"/>
</dbReference>
<dbReference type="STRING" id="10090.ENSMUSP00000021793"/>
<dbReference type="SwissLipids" id="SLP:000000258"/>
<dbReference type="SwissLipids" id="SLP:000000556"/>
<dbReference type="iPTMnet" id="Q9JLJ4"/>
<dbReference type="PhosphoSitePlus" id="Q9JLJ4"/>
<dbReference type="SwissPalm" id="Q9JLJ4"/>
<dbReference type="jPOST" id="Q9JLJ4"/>
<dbReference type="PaxDb" id="10090-ENSMUSP00000021793"/>
<dbReference type="ProteomicsDB" id="277852"/>
<dbReference type="Antibodypedia" id="44274">
    <property type="antibodies" value="168 antibodies from 26 providers"/>
</dbReference>
<dbReference type="DNASU" id="54326"/>
<dbReference type="Ensembl" id="ENSMUST00000021793.15">
    <property type="protein sequence ID" value="ENSMUSP00000021793.8"/>
    <property type="gene ID" value="ENSMUSG00000021364.17"/>
</dbReference>
<dbReference type="GeneID" id="54326"/>
<dbReference type="KEGG" id="mmu:54326"/>
<dbReference type="UCSC" id="uc007qfb.2">
    <property type="organism name" value="mouse"/>
</dbReference>
<dbReference type="AGR" id="MGI:1858960"/>
<dbReference type="CTD" id="54898"/>
<dbReference type="MGI" id="MGI:1858960">
    <property type="gene designation" value="Elovl2"/>
</dbReference>
<dbReference type="VEuPathDB" id="HostDB:ENSMUSG00000021364"/>
<dbReference type="eggNOG" id="KOG3071">
    <property type="taxonomic scope" value="Eukaryota"/>
</dbReference>
<dbReference type="GeneTree" id="ENSGT01050000244838"/>
<dbReference type="InParanoid" id="Q9JLJ4"/>
<dbReference type="OMA" id="WLGTMFM"/>
<dbReference type="OrthoDB" id="434092at2759"/>
<dbReference type="PhylomeDB" id="Q9JLJ4"/>
<dbReference type="TreeFam" id="TF323454"/>
<dbReference type="Reactome" id="R-MMU-2046105">
    <property type="pathway name" value="Linoleic acid (LA) metabolism"/>
</dbReference>
<dbReference type="Reactome" id="R-MMU-2046106">
    <property type="pathway name" value="alpha-linolenic acid (ALA) metabolism"/>
</dbReference>
<dbReference type="Reactome" id="R-MMU-75876">
    <property type="pathway name" value="Synthesis of very long-chain fatty acyl-CoAs"/>
</dbReference>
<dbReference type="UniPathway" id="UPA00658"/>
<dbReference type="BioGRID-ORCS" id="54326">
    <property type="hits" value="3 hits in 80 CRISPR screens"/>
</dbReference>
<dbReference type="PRO" id="PR:Q9JLJ4"/>
<dbReference type="Proteomes" id="UP000000589">
    <property type="component" value="Chromosome 13"/>
</dbReference>
<dbReference type="RNAct" id="Q9JLJ4">
    <property type="molecule type" value="protein"/>
</dbReference>
<dbReference type="Bgee" id="ENSMUSG00000021364">
    <property type="expression patterns" value="Expressed in liver and 192 other cell types or tissues"/>
</dbReference>
<dbReference type="ExpressionAtlas" id="Q9JLJ4">
    <property type="expression patterns" value="baseline and differential"/>
</dbReference>
<dbReference type="GO" id="GO:0005789">
    <property type="term" value="C:endoplasmic reticulum membrane"/>
    <property type="evidence" value="ECO:0000266"/>
    <property type="project" value="MGI"/>
</dbReference>
<dbReference type="GO" id="GO:0016747">
    <property type="term" value="F:acyltransferase activity, transferring groups other than amino-acyl groups"/>
    <property type="evidence" value="ECO:0000314"/>
    <property type="project" value="MGI"/>
</dbReference>
<dbReference type="GO" id="GO:0009922">
    <property type="term" value="F:fatty acid elongase activity"/>
    <property type="evidence" value="ECO:0000314"/>
    <property type="project" value="UniProtKB"/>
</dbReference>
<dbReference type="GO" id="GO:0036109">
    <property type="term" value="P:alpha-linolenic acid metabolic process"/>
    <property type="evidence" value="ECO:0000314"/>
    <property type="project" value="MGI"/>
</dbReference>
<dbReference type="GO" id="GO:0006633">
    <property type="term" value="P:fatty acid biosynthetic process"/>
    <property type="evidence" value="ECO:0000314"/>
    <property type="project" value="MGI"/>
</dbReference>
<dbReference type="GO" id="GO:1901570">
    <property type="term" value="P:fatty acid derivative biosynthetic process"/>
    <property type="evidence" value="ECO:0000314"/>
    <property type="project" value="MGI"/>
</dbReference>
<dbReference type="GO" id="GO:0034626">
    <property type="term" value="P:fatty acid elongation, polyunsaturated fatty acid"/>
    <property type="evidence" value="ECO:0000314"/>
    <property type="project" value="UniProtKB"/>
</dbReference>
<dbReference type="GO" id="GO:0019367">
    <property type="term" value="P:fatty acid elongation, saturated fatty acid"/>
    <property type="evidence" value="ECO:0007669"/>
    <property type="project" value="InterPro"/>
</dbReference>
<dbReference type="GO" id="GO:0043651">
    <property type="term" value="P:linoleic acid metabolic process"/>
    <property type="evidence" value="ECO:0000314"/>
    <property type="project" value="MGI"/>
</dbReference>
<dbReference type="GO" id="GO:0042759">
    <property type="term" value="P:long-chain fatty acid biosynthetic process"/>
    <property type="evidence" value="ECO:0000314"/>
    <property type="project" value="MGI"/>
</dbReference>
<dbReference type="GO" id="GO:0006636">
    <property type="term" value="P:unsaturated fatty acid biosynthetic process"/>
    <property type="evidence" value="ECO:0000314"/>
    <property type="project" value="MGI"/>
</dbReference>
<dbReference type="GO" id="GO:0042761">
    <property type="term" value="P:very long-chain fatty acid biosynthetic process"/>
    <property type="evidence" value="ECO:0000314"/>
    <property type="project" value="UniProtKB"/>
</dbReference>
<dbReference type="GO" id="GO:0000038">
    <property type="term" value="P:very long-chain fatty acid metabolic process"/>
    <property type="evidence" value="ECO:0000314"/>
    <property type="project" value="MGI"/>
</dbReference>
<dbReference type="HAMAP" id="MF_03202">
    <property type="entry name" value="VLCF_elongase_2"/>
    <property type="match status" value="1"/>
</dbReference>
<dbReference type="InterPro" id="IPR030457">
    <property type="entry name" value="ELO_CS"/>
</dbReference>
<dbReference type="InterPro" id="IPR002076">
    <property type="entry name" value="ELO_fam"/>
</dbReference>
<dbReference type="InterPro" id="IPR033680">
    <property type="entry name" value="ELOVL2"/>
</dbReference>
<dbReference type="PANTHER" id="PTHR11157:SF16">
    <property type="entry name" value="ELONGATION OF VERY LONG CHAIN FATTY ACIDS PROTEIN 2"/>
    <property type="match status" value="1"/>
</dbReference>
<dbReference type="PANTHER" id="PTHR11157">
    <property type="entry name" value="FATTY ACID ACYL TRANSFERASE-RELATED"/>
    <property type="match status" value="1"/>
</dbReference>
<dbReference type="Pfam" id="PF01151">
    <property type="entry name" value="ELO"/>
    <property type="match status" value="1"/>
</dbReference>
<dbReference type="PROSITE" id="PS01188">
    <property type="entry name" value="ELO"/>
    <property type="match status" value="1"/>
</dbReference>
<organism>
    <name type="scientific">Mus musculus</name>
    <name type="common">Mouse</name>
    <dbReference type="NCBI Taxonomy" id="10090"/>
    <lineage>
        <taxon>Eukaryota</taxon>
        <taxon>Metazoa</taxon>
        <taxon>Chordata</taxon>
        <taxon>Craniata</taxon>
        <taxon>Vertebrata</taxon>
        <taxon>Euteleostomi</taxon>
        <taxon>Mammalia</taxon>
        <taxon>Eutheria</taxon>
        <taxon>Euarchontoglires</taxon>
        <taxon>Glires</taxon>
        <taxon>Rodentia</taxon>
        <taxon>Myomorpha</taxon>
        <taxon>Muroidea</taxon>
        <taxon>Muridae</taxon>
        <taxon>Murinae</taxon>
        <taxon>Mus</taxon>
        <taxon>Mus</taxon>
    </lineage>
</organism>
<keyword id="KW-0256">Endoplasmic reticulum</keyword>
<keyword id="KW-0275">Fatty acid biosynthesis</keyword>
<keyword id="KW-0276">Fatty acid metabolism</keyword>
<keyword id="KW-0444">Lipid biosynthesis</keyword>
<keyword id="KW-0443">Lipid metabolism</keyword>
<keyword id="KW-0472">Membrane</keyword>
<keyword id="KW-1185">Reference proteome</keyword>
<keyword id="KW-0808">Transferase</keyword>
<keyword id="KW-0812">Transmembrane</keyword>
<keyword id="KW-1133">Transmembrane helix</keyword>
<feature type="chain" id="PRO_0000207539" description="Very long chain fatty acid elongase 2">
    <location>
        <begin position="1"/>
        <end position="292"/>
    </location>
</feature>
<feature type="transmembrane region" description="Helical" evidence="2">
    <location>
        <begin position="29"/>
        <end position="49"/>
    </location>
</feature>
<feature type="transmembrane region" description="Helical" evidence="2">
    <location>
        <begin position="67"/>
        <end position="87"/>
    </location>
</feature>
<feature type="transmembrane region" description="Helical" evidence="2">
    <location>
        <begin position="115"/>
        <end position="135"/>
    </location>
</feature>
<feature type="transmembrane region" description="Helical" evidence="2">
    <location>
        <begin position="153"/>
        <end position="173"/>
    </location>
</feature>
<feature type="transmembrane region" description="Helical" evidence="2">
    <location>
        <begin position="175"/>
        <end position="195"/>
    </location>
</feature>
<feature type="transmembrane region" description="Helical" evidence="2">
    <location>
        <begin position="205"/>
        <end position="225"/>
    </location>
</feature>
<feature type="transmembrane region" description="Helical" evidence="2">
    <location>
        <begin position="230"/>
        <end position="250"/>
    </location>
</feature>
<feature type="short sequence motif" description="Di-lysine motif" evidence="2">
    <location>
        <begin position="289"/>
        <end position="292"/>
    </location>
</feature>
<sequence length="292" mass="34207">MEQLKAFDNEVNAFLDNMFGPRDSRVRGWFLLDSYLPTFILTITYLLSIWLGNKYMKNRPALSLRGILTLYNLAITLLSAYMLVELILSSWEGGYNLQCQNLDSAGEGDVRVAKVLWWYYFSKLVEFLDTIFFVLRKKTNQITFLHVYHHASMFNIWWCVLNWIPCGQSFFGPTLNSFIHILMYSYYGLSVFPSMHKYLWWKKYLTQAQLVQFVLTITHTLSAVVKPCGFPFGCLIFQSSYMMTLVILFLNFYIQTYRKKPVKKELQEKEVKNGFPKAHLIVANGMTDKKAQ</sequence>
<accession>Q9JLJ4</accession>
<accession>Q9D5Z2</accession>
<reference key="1">
    <citation type="journal article" date="2000" name="J. Cell Biol.">
        <title>Role of a new mammalian gene family in the biosynthesis of very long chain fatty acids and sphingolipids.</title>
        <authorList>
            <person name="Tvrdik P."/>
            <person name="Westerberg R."/>
            <person name="Silve S."/>
            <person name="Asadi A."/>
            <person name="Jakobsson A."/>
            <person name="Cannon B."/>
            <person name="Loison G."/>
            <person name="Jacobsson A."/>
        </authorList>
    </citation>
    <scope>NUCLEOTIDE SEQUENCE [MRNA]</scope>
    <scope>TISSUE SPECIFICITY</scope>
    <source>
        <strain>BALB/cJ</strain>
        <tissue>Liver</tissue>
    </source>
</reference>
<reference key="2">
    <citation type="journal article" date="2005" name="Science">
        <title>The transcriptional landscape of the mammalian genome.</title>
        <authorList>
            <person name="Carninci P."/>
            <person name="Kasukawa T."/>
            <person name="Katayama S."/>
            <person name="Gough J."/>
            <person name="Frith M.C."/>
            <person name="Maeda N."/>
            <person name="Oyama R."/>
            <person name="Ravasi T."/>
            <person name="Lenhard B."/>
            <person name="Wells C."/>
            <person name="Kodzius R."/>
            <person name="Shimokawa K."/>
            <person name="Bajic V.B."/>
            <person name="Brenner S.E."/>
            <person name="Batalov S."/>
            <person name="Forrest A.R."/>
            <person name="Zavolan M."/>
            <person name="Davis M.J."/>
            <person name="Wilming L.G."/>
            <person name="Aidinis V."/>
            <person name="Allen J.E."/>
            <person name="Ambesi-Impiombato A."/>
            <person name="Apweiler R."/>
            <person name="Aturaliya R.N."/>
            <person name="Bailey T.L."/>
            <person name="Bansal M."/>
            <person name="Baxter L."/>
            <person name="Beisel K.W."/>
            <person name="Bersano T."/>
            <person name="Bono H."/>
            <person name="Chalk A.M."/>
            <person name="Chiu K.P."/>
            <person name="Choudhary V."/>
            <person name="Christoffels A."/>
            <person name="Clutterbuck D.R."/>
            <person name="Crowe M.L."/>
            <person name="Dalla E."/>
            <person name="Dalrymple B.P."/>
            <person name="de Bono B."/>
            <person name="Della Gatta G."/>
            <person name="di Bernardo D."/>
            <person name="Down T."/>
            <person name="Engstrom P."/>
            <person name="Fagiolini M."/>
            <person name="Faulkner G."/>
            <person name="Fletcher C.F."/>
            <person name="Fukushima T."/>
            <person name="Furuno M."/>
            <person name="Futaki S."/>
            <person name="Gariboldi M."/>
            <person name="Georgii-Hemming P."/>
            <person name="Gingeras T.R."/>
            <person name="Gojobori T."/>
            <person name="Green R.E."/>
            <person name="Gustincich S."/>
            <person name="Harbers M."/>
            <person name="Hayashi Y."/>
            <person name="Hensch T.K."/>
            <person name="Hirokawa N."/>
            <person name="Hill D."/>
            <person name="Huminiecki L."/>
            <person name="Iacono M."/>
            <person name="Ikeo K."/>
            <person name="Iwama A."/>
            <person name="Ishikawa T."/>
            <person name="Jakt M."/>
            <person name="Kanapin A."/>
            <person name="Katoh M."/>
            <person name="Kawasawa Y."/>
            <person name="Kelso J."/>
            <person name="Kitamura H."/>
            <person name="Kitano H."/>
            <person name="Kollias G."/>
            <person name="Krishnan S.P."/>
            <person name="Kruger A."/>
            <person name="Kummerfeld S.K."/>
            <person name="Kurochkin I.V."/>
            <person name="Lareau L.F."/>
            <person name="Lazarevic D."/>
            <person name="Lipovich L."/>
            <person name="Liu J."/>
            <person name="Liuni S."/>
            <person name="McWilliam S."/>
            <person name="Madan Babu M."/>
            <person name="Madera M."/>
            <person name="Marchionni L."/>
            <person name="Matsuda H."/>
            <person name="Matsuzawa S."/>
            <person name="Miki H."/>
            <person name="Mignone F."/>
            <person name="Miyake S."/>
            <person name="Morris K."/>
            <person name="Mottagui-Tabar S."/>
            <person name="Mulder N."/>
            <person name="Nakano N."/>
            <person name="Nakauchi H."/>
            <person name="Ng P."/>
            <person name="Nilsson R."/>
            <person name="Nishiguchi S."/>
            <person name="Nishikawa S."/>
            <person name="Nori F."/>
            <person name="Ohara O."/>
            <person name="Okazaki Y."/>
            <person name="Orlando V."/>
            <person name="Pang K.C."/>
            <person name="Pavan W.J."/>
            <person name="Pavesi G."/>
            <person name="Pesole G."/>
            <person name="Petrovsky N."/>
            <person name="Piazza S."/>
            <person name="Reed J."/>
            <person name="Reid J.F."/>
            <person name="Ring B.Z."/>
            <person name="Ringwald M."/>
            <person name="Rost B."/>
            <person name="Ruan Y."/>
            <person name="Salzberg S.L."/>
            <person name="Sandelin A."/>
            <person name="Schneider C."/>
            <person name="Schoenbach C."/>
            <person name="Sekiguchi K."/>
            <person name="Semple C.A."/>
            <person name="Seno S."/>
            <person name="Sessa L."/>
            <person name="Sheng Y."/>
            <person name="Shibata Y."/>
            <person name="Shimada H."/>
            <person name="Shimada K."/>
            <person name="Silva D."/>
            <person name="Sinclair B."/>
            <person name="Sperling S."/>
            <person name="Stupka E."/>
            <person name="Sugiura K."/>
            <person name="Sultana R."/>
            <person name="Takenaka Y."/>
            <person name="Taki K."/>
            <person name="Tammoja K."/>
            <person name="Tan S.L."/>
            <person name="Tang S."/>
            <person name="Taylor M.S."/>
            <person name="Tegner J."/>
            <person name="Teichmann S.A."/>
            <person name="Ueda H.R."/>
            <person name="van Nimwegen E."/>
            <person name="Verardo R."/>
            <person name="Wei C.L."/>
            <person name="Yagi K."/>
            <person name="Yamanishi H."/>
            <person name="Zabarovsky E."/>
            <person name="Zhu S."/>
            <person name="Zimmer A."/>
            <person name="Hide W."/>
            <person name="Bult C."/>
            <person name="Grimmond S.M."/>
            <person name="Teasdale R.D."/>
            <person name="Liu E.T."/>
            <person name="Brusic V."/>
            <person name="Quackenbush J."/>
            <person name="Wahlestedt C."/>
            <person name="Mattick J.S."/>
            <person name="Hume D.A."/>
            <person name="Kai C."/>
            <person name="Sasaki D."/>
            <person name="Tomaru Y."/>
            <person name="Fukuda S."/>
            <person name="Kanamori-Katayama M."/>
            <person name="Suzuki M."/>
            <person name="Aoki J."/>
            <person name="Arakawa T."/>
            <person name="Iida J."/>
            <person name="Imamura K."/>
            <person name="Itoh M."/>
            <person name="Kato T."/>
            <person name="Kawaji H."/>
            <person name="Kawagashira N."/>
            <person name="Kawashima T."/>
            <person name="Kojima M."/>
            <person name="Kondo S."/>
            <person name="Konno H."/>
            <person name="Nakano K."/>
            <person name="Ninomiya N."/>
            <person name="Nishio T."/>
            <person name="Okada M."/>
            <person name="Plessy C."/>
            <person name="Shibata K."/>
            <person name="Shiraki T."/>
            <person name="Suzuki S."/>
            <person name="Tagami M."/>
            <person name="Waki K."/>
            <person name="Watahiki A."/>
            <person name="Okamura-Oho Y."/>
            <person name="Suzuki H."/>
            <person name="Kawai J."/>
            <person name="Hayashizaki Y."/>
        </authorList>
    </citation>
    <scope>NUCLEOTIDE SEQUENCE [LARGE SCALE MRNA]</scope>
    <source>
        <strain>C57BL/6J</strain>
        <tissue>Testis</tissue>
    </source>
</reference>
<reference key="3">
    <citation type="journal article" date="2002" name="Lipids">
        <title>Identification and expression of mammalian long-chain PUFA elongation enzymes.</title>
        <authorList>
            <person name="Leonard A.E."/>
            <person name="Kelder B."/>
            <person name="Bobik E.G."/>
            <person name="Chuang L.-T."/>
            <person name="Lewis C.J."/>
            <person name="Kopchick J.J."/>
            <person name="Mukerji P."/>
            <person name="Huang Y.-S."/>
        </authorList>
    </citation>
    <scope>FUNCTION</scope>
    <scope>CATALYTIC ACTIVITY</scope>
    <scope>PATHWAY</scope>
    <scope>TISSUE SPECIFICITY</scope>
</reference>
<reference key="4">
    <citation type="journal article" date="2010" name="Cell">
        <title>A tissue-specific atlas of mouse protein phosphorylation and expression.</title>
        <authorList>
            <person name="Huttlin E.L."/>
            <person name="Jedrychowski M.P."/>
            <person name="Elias J.E."/>
            <person name="Goswami T."/>
            <person name="Rad R."/>
            <person name="Beausoleil S.A."/>
            <person name="Villen J."/>
            <person name="Haas W."/>
            <person name="Sowa M.E."/>
            <person name="Gygi S.P."/>
        </authorList>
    </citation>
    <scope>IDENTIFICATION BY MASS SPECTROMETRY [LARGE SCALE ANALYSIS]</scope>
    <source>
        <tissue>Kidney</tissue>
        <tissue>Liver</tissue>
        <tissue>Testis</tissue>
    </source>
</reference>
<reference key="5">
    <citation type="journal article" date="2011" name="J. Lipid Res.">
        <title>ELOVL2 controls the level of n-6 28:5 and 30:5 fatty acids in testis, a prerequisite for male fertility and sperm maturation in mice.</title>
        <authorList>
            <person name="Zadravec D."/>
            <person name="Tvrdik P."/>
            <person name="Guillou H."/>
            <person name="Haslam R."/>
            <person name="Kobayashi T."/>
            <person name="Napier J.A."/>
            <person name="Capecchi M.R."/>
            <person name="Jacobsson A."/>
        </authorList>
    </citation>
    <scope>FUNCTION</scope>
    <scope>CATALYTIC ACTIVITY</scope>
    <scope>PATHWAY</scope>
</reference>